<feature type="chain" id="PRO_0000420184" description="Zinc metalloproteinase-disintegrin-like moojenin">
    <location>
        <begin position="1" status="less than"/>
        <end position="33" status="greater than"/>
    </location>
</feature>
<feature type="chain" id="PRO_0000420185" description="Disintegrin-like">
    <location>
        <begin position="1"/>
        <end position="33" status="greater than"/>
    </location>
</feature>
<feature type="domain" description="Disintegrin" evidence="2">
    <location>
        <begin position="8"/>
        <end position="33" status="greater than"/>
    </location>
</feature>
<feature type="binding site" evidence="1">
    <location>
        <position position="10"/>
    </location>
    <ligand>
        <name>Ca(2+)</name>
        <dbReference type="ChEBI" id="CHEBI:29108"/>
        <label>1</label>
    </ligand>
</feature>
<feature type="binding site" evidence="1">
    <location>
        <position position="13"/>
    </location>
    <ligand>
        <name>Ca(2+)</name>
        <dbReference type="ChEBI" id="CHEBI:29108"/>
        <label>1</label>
    </ligand>
</feature>
<feature type="binding site" evidence="1">
    <location>
        <position position="15"/>
    </location>
    <ligand>
        <name>Ca(2+)</name>
        <dbReference type="ChEBI" id="CHEBI:29108"/>
        <label>1</label>
    </ligand>
</feature>
<feature type="binding site" evidence="1">
    <location>
        <position position="17"/>
    </location>
    <ligand>
        <name>Ca(2+)</name>
        <dbReference type="ChEBI" id="CHEBI:29108"/>
        <label>1</label>
    </ligand>
</feature>
<feature type="binding site" evidence="1">
    <location>
        <position position="20"/>
    </location>
    <ligand>
        <name>Ca(2+)</name>
        <dbReference type="ChEBI" id="CHEBI:29108"/>
        <label>1</label>
    </ligand>
</feature>
<feature type="binding site" evidence="1">
    <location>
        <position position="23"/>
    </location>
    <ligand>
        <name>Ca(2+)</name>
        <dbReference type="ChEBI" id="CHEBI:29108"/>
        <label>1</label>
    </ligand>
</feature>
<feature type="disulfide bond" description="In disintegrin-like; alternate" evidence="2">
    <location>
        <begin position="11"/>
        <end position="30"/>
    </location>
</feature>
<feature type="disulfide bond" description="In zinc metalloproteinase-disintegrin-like moojenin; alternate" evidence="2">
    <location>
        <begin position="11"/>
        <end status="unknown"/>
    </location>
</feature>
<feature type="disulfide bond" evidence="2">
    <location>
        <begin position="22"/>
        <end status="unknown"/>
    </location>
</feature>
<feature type="disulfide bond" description="In zinc metalloproteinase-disintegrin-like moojenin; alternate" evidence="2">
    <location>
        <begin position="24"/>
        <end position="30"/>
    </location>
</feature>
<feature type="non-terminal residue">
    <location>
        <position position="1"/>
    </location>
</feature>
<feature type="non-terminal residue">
    <location>
        <position position="33"/>
    </location>
</feature>
<sequence length="33" mass="3461">LGPDIVSPPVCGNELLEVGEECDCGTPENCQNE</sequence>
<protein>
    <recommendedName>
        <fullName evidence="4">Zinc metalloproteinase-disintegrin-like moojenin</fullName>
        <ecNumber>3.4.24.-</ecNumber>
    </recommendedName>
    <alternativeName>
        <fullName evidence="4">Snake venom metalloproteinase</fullName>
        <shortName evidence="4">SVMP</shortName>
    </alternativeName>
    <component>
        <recommendedName>
            <fullName evidence="4">Disintegrin-like</fullName>
        </recommendedName>
    </component>
</protein>
<proteinExistence type="evidence at protein level"/>
<reference key="1">
    <citation type="journal article" date="2012" name="Toxicon">
        <title>Isolation and characterization of moojenin, an acid-active, anticoagulant metalloproteinase from Bothrops moojeni venom.</title>
        <authorList>
            <person name="de Morais N.C."/>
            <person name="Neves Mamede C.C."/>
            <person name="Fonseca K.C."/>
            <person name="de Queiroz M.R."/>
            <person name="Gomes-Filho S.A."/>
            <person name="Santos-Filho N.A."/>
            <person name="Bordon K.D."/>
            <person name="Beletti M.E."/>
            <person name="Sampaio S.V."/>
            <person name="Arantes E.C."/>
            <person name="de Oliveira F."/>
        </authorList>
    </citation>
    <scope>PROTEIN SEQUENCE</scope>
    <scope>FUNCTION</scope>
    <scope>BIOASSAY</scope>
    <scope>BIOPHYSICOCHEMICAL PROPERTIES</scope>
    <scope>ACTIVITY REGULATION</scope>
    <scope>SUBUNIT</scope>
    <scope>SUBCELLULAR LOCATION</scope>
    <source>
        <tissue>Venom</tissue>
    </source>
</reference>
<comment type="function">
    <text evidence="3">Metalloproteinase moojenin: snake venom metalloproteinase that cleaves both alpha- and beta-chains of fibrinogen, but not the gamma-chain. Shows a coagulant activity on bovine plasma about 3.1 fold lower than crude venom. Renders the blood incoagulable when intraperitoneally administered into mice. Induces necrosis in liver and muscle, but does not cause histological alterations in mouse lungs, kidney or heart.</text>
</comment>
<comment type="cofactor">
    <cofactor evidence="1">
        <name>Zn(2+)</name>
        <dbReference type="ChEBI" id="CHEBI:29105"/>
    </cofactor>
    <text evidence="1">Binds 1 zinc ion per subunit.</text>
</comment>
<comment type="activity regulation">
    <text evidence="3">The fibrinogenolytic and coagulant activities of the moojenin were abolished by preincubation with EDTA, 1,10-phenanthroline and beta-mercaptoethanol.</text>
</comment>
<comment type="biophysicochemical properties">
    <phDependence>
        <text evidence="3">Optimum pH is 4.0.</text>
    </phDependence>
    <temperatureDependence>
        <text evidence="3">Optimum temperature is 30-40 degrees Celsius.</text>
    </temperatureDependence>
</comment>
<comment type="subunit">
    <text evidence="3">Monomer.</text>
</comment>
<comment type="subcellular location">
    <subcellularLocation>
        <location evidence="3">Secreted</location>
    </subcellularLocation>
</comment>
<comment type="tissue specificity">
    <text evidence="6">Expressed by the venom gland.</text>
</comment>
<comment type="PTM">
    <text evidence="5">The N-terminus (from the N-terminal region of the metalloproteinase domain) is blocked.</text>
</comment>
<comment type="miscellaneous">
    <text evidence="6">Negative results: does not cause hemorrhage in mice with doses up to 50 g. Intraplantar injection of moojenin (50 mg) into the rat hind-paw does not cause significant edematogenic or hyperalgesic effects (PubMed:22975266).</text>
</comment>
<comment type="similarity">
    <text evidence="5">Belongs to the venom metalloproteinase (M12B) family. P-III subfamily. P-IIIb sub-subfamily.</text>
</comment>
<evidence type="ECO:0000250" key="1"/>
<evidence type="ECO:0000255" key="2">
    <source>
        <dbReference type="PROSITE-ProRule" id="PRU00068"/>
    </source>
</evidence>
<evidence type="ECO:0000269" key="3">
    <source>
    </source>
</evidence>
<evidence type="ECO:0000303" key="4">
    <source>
    </source>
</evidence>
<evidence type="ECO:0000305" key="5"/>
<evidence type="ECO:0000305" key="6">
    <source>
    </source>
</evidence>
<keyword id="KW-0106">Calcium</keyword>
<keyword id="KW-1217">Cell adhesion impairing toxin</keyword>
<keyword id="KW-0903">Direct protein sequencing</keyword>
<keyword id="KW-1015">Disulfide bond</keyword>
<keyword id="KW-1206">Fibrinogenolytic toxin</keyword>
<keyword id="KW-1199">Hemostasis impairing toxin</keyword>
<keyword id="KW-0378">Hydrolase</keyword>
<keyword id="KW-0479">Metal-binding</keyword>
<keyword id="KW-0482">Metalloprotease</keyword>
<keyword id="KW-0959">Myotoxin</keyword>
<keyword id="KW-0645">Protease</keyword>
<keyword id="KW-0964">Secreted</keyword>
<keyword id="KW-0800">Toxin</keyword>
<keyword id="KW-0862">Zinc</keyword>
<organism>
    <name type="scientific">Bothrops moojeni</name>
    <name type="common">Lance-headed viper</name>
    <name type="synonym">Caissaca</name>
    <dbReference type="NCBI Taxonomy" id="98334"/>
    <lineage>
        <taxon>Eukaryota</taxon>
        <taxon>Metazoa</taxon>
        <taxon>Chordata</taxon>
        <taxon>Craniata</taxon>
        <taxon>Vertebrata</taxon>
        <taxon>Euteleostomi</taxon>
        <taxon>Lepidosauria</taxon>
        <taxon>Squamata</taxon>
        <taxon>Bifurcata</taxon>
        <taxon>Unidentata</taxon>
        <taxon>Episquamata</taxon>
        <taxon>Toxicofera</taxon>
        <taxon>Serpentes</taxon>
        <taxon>Colubroidea</taxon>
        <taxon>Viperidae</taxon>
        <taxon>Crotalinae</taxon>
        <taxon>Bothrops</taxon>
    </lineage>
</organism>
<accession>P0DKR0</accession>
<name>VM3_BOTMO</name>
<dbReference type="EC" id="3.4.24.-"/>
<dbReference type="SMR" id="P0DKR0"/>
<dbReference type="GO" id="GO:0005576">
    <property type="term" value="C:extracellular region"/>
    <property type="evidence" value="ECO:0007669"/>
    <property type="project" value="UniProtKB-SubCell"/>
</dbReference>
<dbReference type="GO" id="GO:0046872">
    <property type="term" value="F:metal ion binding"/>
    <property type="evidence" value="ECO:0007669"/>
    <property type="project" value="UniProtKB-KW"/>
</dbReference>
<dbReference type="GO" id="GO:0008237">
    <property type="term" value="F:metallopeptidase activity"/>
    <property type="evidence" value="ECO:0007669"/>
    <property type="project" value="UniProtKB-KW"/>
</dbReference>
<dbReference type="GO" id="GO:0090729">
    <property type="term" value="F:toxin activity"/>
    <property type="evidence" value="ECO:0007669"/>
    <property type="project" value="UniProtKB-KW"/>
</dbReference>
<dbReference type="GO" id="GO:0006508">
    <property type="term" value="P:proteolysis"/>
    <property type="evidence" value="ECO:0007669"/>
    <property type="project" value="UniProtKB-KW"/>
</dbReference>
<dbReference type="Gene3D" id="4.10.70.10">
    <property type="entry name" value="Disintegrin domain"/>
    <property type="match status" value="1"/>
</dbReference>
<dbReference type="InterPro" id="IPR036436">
    <property type="entry name" value="Disintegrin_dom_sf"/>
</dbReference>